<protein>
    <recommendedName>
        <fullName evidence="1">Small ribosomal subunit protein uS2</fullName>
    </recommendedName>
    <alternativeName>
        <fullName evidence="3">30S ribosomal protein S2</fullName>
    </alternativeName>
</protein>
<reference key="1">
    <citation type="journal article" date="2009" name="BMC Microbiol.">
        <title>The genome sequence of Geobacter metallireducens: features of metabolism, physiology and regulation common and dissimilar to Geobacter sulfurreducens.</title>
        <authorList>
            <person name="Aklujkar M."/>
            <person name="Krushkal J."/>
            <person name="DiBartolo G."/>
            <person name="Lapidus A."/>
            <person name="Land M.L."/>
            <person name="Lovley D.R."/>
        </authorList>
    </citation>
    <scope>NUCLEOTIDE SEQUENCE [LARGE SCALE GENOMIC DNA]</scope>
    <source>
        <strain>ATCC 53774 / DSM 7210 / GS-15</strain>
    </source>
</reference>
<sequence>MSSVTMKELLEAGVHFGHQTKRWNPKMKPYIFGARNGIYIIDLQKTVRLFKNAYSFVRECAQSGETILFVGTKKQAQDAIGEEASRCNMYYVNQRWLGGMLTNFATVKQSIDRLKRLDAMFADGTVEAYTKKEALQLEKERQKLEKTLGGIKGMGKVPGALFVIDPKNETIAINEAKKLGIPVVAVVDTNCDPDPIDYVIPGNDDAIRAIRLLTSKMADAVLEGAQARDAQLQTGEEEMAAAEGESEQVEA</sequence>
<name>RS2_GEOMG</name>
<feature type="chain" id="PRO_1000003966" description="Small ribosomal subunit protein uS2">
    <location>
        <begin position="1"/>
        <end position="251"/>
    </location>
</feature>
<feature type="region of interest" description="Disordered" evidence="2">
    <location>
        <begin position="232"/>
        <end position="251"/>
    </location>
</feature>
<feature type="compositionally biased region" description="Acidic residues" evidence="2">
    <location>
        <begin position="235"/>
        <end position="251"/>
    </location>
</feature>
<evidence type="ECO:0000255" key="1">
    <source>
        <dbReference type="HAMAP-Rule" id="MF_00291"/>
    </source>
</evidence>
<evidence type="ECO:0000256" key="2">
    <source>
        <dbReference type="SAM" id="MobiDB-lite"/>
    </source>
</evidence>
<evidence type="ECO:0000305" key="3"/>
<keyword id="KW-1185">Reference proteome</keyword>
<keyword id="KW-0687">Ribonucleoprotein</keyword>
<keyword id="KW-0689">Ribosomal protein</keyword>
<comment type="similarity">
    <text evidence="1">Belongs to the universal ribosomal protein uS2 family.</text>
</comment>
<organism>
    <name type="scientific">Geobacter metallireducens (strain ATCC 53774 / DSM 7210 / GS-15)</name>
    <dbReference type="NCBI Taxonomy" id="269799"/>
    <lineage>
        <taxon>Bacteria</taxon>
        <taxon>Pseudomonadati</taxon>
        <taxon>Thermodesulfobacteriota</taxon>
        <taxon>Desulfuromonadia</taxon>
        <taxon>Geobacterales</taxon>
        <taxon>Geobacteraceae</taxon>
        <taxon>Geobacter</taxon>
    </lineage>
</organism>
<gene>
    <name evidence="1" type="primary">rpsB</name>
    <name type="ordered locus">Gmet_1250</name>
</gene>
<accession>Q39W88</accession>
<dbReference type="EMBL" id="CP000148">
    <property type="protein sequence ID" value="ABB31486.1"/>
    <property type="molecule type" value="Genomic_DNA"/>
</dbReference>
<dbReference type="RefSeq" id="WP_004512117.1">
    <property type="nucleotide sequence ID" value="NC_007517.1"/>
</dbReference>
<dbReference type="SMR" id="Q39W88"/>
<dbReference type="STRING" id="269799.Gmet_1250"/>
<dbReference type="KEGG" id="gme:Gmet_1250"/>
<dbReference type="eggNOG" id="COG0052">
    <property type="taxonomic scope" value="Bacteria"/>
</dbReference>
<dbReference type="HOGENOM" id="CLU_040318_1_2_7"/>
<dbReference type="Proteomes" id="UP000007073">
    <property type="component" value="Chromosome"/>
</dbReference>
<dbReference type="GO" id="GO:0022627">
    <property type="term" value="C:cytosolic small ribosomal subunit"/>
    <property type="evidence" value="ECO:0007669"/>
    <property type="project" value="TreeGrafter"/>
</dbReference>
<dbReference type="GO" id="GO:0003735">
    <property type="term" value="F:structural constituent of ribosome"/>
    <property type="evidence" value="ECO:0007669"/>
    <property type="project" value="InterPro"/>
</dbReference>
<dbReference type="GO" id="GO:0006412">
    <property type="term" value="P:translation"/>
    <property type="evidence" value="ECO:0007669"/>
    <property type="project" value="UniProtKB-UniRule"/>
</dbReference>
<dbReference type="CDD" id="cd01425">
    <property type="entry name" value="RPS2"/>
    <property type="match status" value="1"/>
</dbReference>
<dbReference type="FunFam" id="1.10.287.610:FF:000001">
    <property type="entry name" value="30S ribosomal protein S2"/>
    <property type="match status" value="1"/>
</dbReference>
<dbReference type="Gene3D" id="3.40.50.10490">
    <property type="entry name" value="Glucose-6-phosphate isomerase like protein, domain 1"/>
    <property type="match status" value="1"/>
</dbReference>
<dbReference type="Gene3D" id="1.10.287.610">
    <property type="entry name" value="Helix hairpin bin"/>
    <property type="match status" value="1"/>
</dbReference>
<dbReference type="HAMAP" id="MF_00291_B">
    <property type="entry name" value="Ribosomal_uS2_B"/>
    <property type="match status" value="1"/>
</dbReference>
<dbReference type="InterPro" id="IPR001865">
    <property type="entry name" value="Ribosomal_uS2"/>
</dbReference>
<dbReference type="InterPro" id="IPR005706">
    <property type="entry name" value="Ribosomal_uS2_bac/mit/plastid"/>
</dbReference>
<dbReference type="InterPro" id="IPR018130">
    <property type="entry name" value="Ribosomal_uS2_CS"/>
</dbReference>
<dbReference type="InterPro" id="IPR023591">
    <property type="entry name" value="Ribosomal_uS2_flav_dom_sf"/>
</dbReference>
<dbReference type="NCBIfam" id="TIGR01011">
    <property type="entry name" value="rpsB_bact"/>
    <property type="match status" value="1"/>
</dbReference>
<dbReference type="PANTHER" id="PTHR12534">
    <property type="entry name" value="30S RIBOSOMAL PROTEIN S2 PROKARYOTIC AND ORGANELLAR"/>
    <property type="match status" value="1"/>
</dbReference>
<dbReference type="PANTHER" id="PTHR12534:SF0">
    <property type="entry name" value="SMALL RIBOSOMAL SUBUNIT PROTEIN US2M"/>
    <property type="match status" value="1"/>
</dbReference>
<dbReference type="Pfam" id="PF00318">
    <property type="entry name" value="Ribosomal_S2"/>
    <property type="match status" value="1"/>
</dbReference>
<dbReference type="PRINTS" id="PR00395">
    <property type="entry name" value="RIBOSOMALS2"/>
</dbReference>
<dbReference type="SUPFAM" id="SSF52313">
    <property type="entry name" value="Ribosomal protein S2"/>
    <property type="match status" value="1"/>
</dbReference>
<dbReference type="PROSITE" id="PS00962">
    <property type="entry name" value="RIBOSOMAL_S2_1"/>
    <property type="match status" value="1"/>
</dbReference>
<dbReference type="PROSITE" id="PS00963">
    <property type="entry name" value="RIBOSOMAL_S2_2"/>
    <property type="match status" value="1"/>
</dbReference>
<proteinExistence type="inferred from homology"/>